<reference key="1">
    <citation type="submission" date="2009-04" db="EMBL/GenBank/DDBJ databases">
        <title>Genome sequence of Bacillus anthracis A0248.</title>
        <authorList>
            <person name="Dodson R.J."/>
            <person name="Munk A.C."/>
            <person name="Bruce D."/>
            <person name="Detter C."/>
            <person name="Tapia R."/>
            <person name="Sutton G."/>
            <person name="Sims D."/>
            <person name="Brettin T."/>
        </authorList>
    </citation>
    <scope>NUCLEOTIDE SEQUENCE [LARGE SCALE GENOMIC DNA]</scope>
    <source>
        <strain>A0248</strain>
    </source>
</reference>
<dbReference type="EC" id="1.14.14.18" evidence="1"/>
<dbReference type="EMBL" id="CP001598">
    <property type="protein sequence ID" value="ACQ48026.1"/>
    <property type="molecule type" value="Genomic_DNA"/>
</dbReference>
<dbReference type="RefSeq" id="WP_000587815.1">
    <property type="nucleotide sequence ID" value="NC_012659.1"/>
</dbReference>
<dbReference type="SMR" id="C3PAD1"/>
<dbReference type="GeneID" id="92798870"/>
<dbReference type="KEGG" id="bai:BAA_4795"/>
<dbReference type="HOGENOM" id="CLU_141544_2_1_9"/>
<dbReference type="GO" id="GO:0005737">
    <property type="term" value="C:cytoplasm"/>
    <property type="evidence" value="ECO:0007669"/>
    <property type="project" value="UniProtKB-SubCell"/>
</dbReference>
<dbReference type="GO" id="GO:0020037">
    <property type="term" value="F:heme binding"/>
    <property type="evidence" value="ECO:0007669"/>
    <property type="project" value="UniProtKB-UniRule"/>
</dbReference>
<dbReference type="GO" id="GO:0004392">
    <property type="term" value="F:heme oxygenase (decyclizing) activity"/>
    <property type="evidence" value="ECO:0007669"/>
    <property type="project" value="UniProtKB-UniRule"/>
</dbReference>
<dbReference type="GO" id="GO:0005506">
    <property type="term" value="F:iron ion binding"/>
    <property type="evidence" value="ECO:0007669"/>
    <property type="project" value="UniProtKB-UniRule"/>
</dbReference>
<dbReference type="GO" id="GO:0042167">
    <property type="term" value="P:heme catabolic process"/>
    <property type="evidence" value="ECO:0007669"/>
    <property type="project" value="UniProtKB-UniRule"/>
</dbReference>
<dbReference type="GO" id="GO:0033212">
    <property type="term" value="P:iron import into cell"/>
    <property type="evidence" value="ECO:0007669"/>
    <property type="project" value="InterPro"/>
</dbReference>
<dbReference type="Gene3D" id="3.30.70.100">
    <property type="match status" value="1"/>
</dbReference>
<dbReference type="HAMAP" id="MF_01272">
    <property type="entry name" value="Heme_degrading_monooxygenase"/>
    <property type="match status" value="1"/>
</dbReference>
<dbReference type="InterPro" id="IPR007138">
    <property type="entry name" value="ABM_dom"/>
</dbReference>
<dbReference type="InterPro" id="IPR011008">
    <property type="entry name" value="Dimeric_a/b-barrel"/>
</dbReference>
<dbReference type="InterPro" id="IPR050404">
    <property type="entry name" value="Heme-degrading_MO"/>
</dbReference>
<dbReference type="InterPro" id="IPR023953">
    <property type="entry name" value="IsdG"/>
</dbReference>
<dbReference type="NCBIfam" id="NF009839">
    <property type="entry name" value="PRK13314.1"/>
    <property type="match status" value="1"/>
</dbReference>
<dbReference type="PANTHER" id="PTHR34474:SF4">
    <property type="entry name" value="HEME OXYGENASE (STAPHYLOBILIN-PRODUCING) 1"/>
    <property type="match status" value="1"/>
</dbReference>
<dbReference type="PANTHER" id="PTHR34474">
    <property type="entry name" value="SIGNAL TRANSDUCTION PROTEIN TRAP"/>
    <property type="match status" value="1"/>
</dbReference>
<dbReference type="Pfam" id="PF03992">
    <property type="entry name" value="ABM"/>
    <property type="match status" value="1"/>
</dbReference>
<dbReference type="SUPFAM" id="SSF54909">
    <property type="entry name" value="Dimeric alpha+beta barrel"/>
    <property type="match status" value="1"/>
</dbReference>
<dbReference type="PROSITE" id="PS51725">
    <property type="entry name" value="ABM"/>
    <property type="match status" value="1"/>
</dbReference>
<organism>
    <name type="scientific">Bacillus anthracis (strain A0248)</name>
    <dbReference type="NCBI Taxonomy" id="592021"/>
    <lineage>
        <taxon>Bacteria</taxon>
        <taxon>Bacillati</taxon>
        <taxon>Bacillota</taxon>
        <taxon>Bacilli</taxon>
        <taxon>Bacillales</taxon>
        <taxon>Bacillaceae</taxon>
        <taxon>Bacillus</taxon>
        <taxon>Bacillus cereus group</taxon>
    </lineage>
</organism>
<feature type="chain" id="PRO_1000165177" description="Heme-degrading monooxygenase">
    <location>
        <begin position="1"/>
        <end position="107"/>
    </location>
</feature>
<feature type="domain" description="ABM" evidence="1">
    <location>
        <begin position="2"/>
        <end position="94"/>
    </location>
</feature>
<feature type="binding site" evidence="1">
    <location>
        <position position="6"/>
    </location>
    <ligand>
        <name>Fe cation</name>
        <dbReference type="ChEBI" id="CHEBI:24875"/>
    </ligand>
</feature>
<feature type="binding site" description="axial binding residue" evidence="1">
    <location>
        <position position="76"/>
    </location>
    <ligand>
        <name>heme</name>
        <dbReference type="ChEBI" id="CHEBI:30413"/>
    </ligand>
    <ligandPart>
        <name>Fe</name>
        <dbReference type="ChEBI" id="CHEBI:18248"/>
    </ligandPart>
</feature>
<feature type="site" description="Transition state stabilizer" evidence="1">
    <location>
        <position position="66"/>
    </location>
</feature>
<keyword id="KW-0963">Cytoplasm</keyword>
<keyword id="KW-0349">Heme</keyword>
<keyword id="KW-0408">Iron</keyword>
<keyword id="KW-0479">Metal-binding</keyword>
<keyword id="KW-0503">Monooxygenase</keyword>
<keyword id="KW-0560">Oxidoreductase</keyword>
<evidence type="ECO:0000255" key="1">
    <source>
        <dbReference type="HAMAP-Rule" id="MF_01272"/>
    </source>
</evidence>
<comment type="function">
    <text evidence="1">Allows bacterial pathogens to use the host heme as an iron source. Catalyzes the oxidative degradation of the heme macrocyclic porphyrin ring to the biliverdin in the presence of a suitable electron donor such as ascorbate or NADPH--cytochrome P450 reductase, with subsequent release of free iron.</text>
</comment>
<comment type="catalytic activity">
    <reaction evidence="1">
        <text>heme b + 3 reduced [NADPH--hemoprotein reductase] + 3 O2 = biliverdin IXalpha + CO + Fe(2+) + 3 oxidized [NADPH--hemoprotein reductase] + 3 H2O + H(+)</text>
        <dbReference type="Rhea" id="RHEA:21764"/>
        <dbReference type="Rhea" id="RHEA-COMP:11964"/>
        <dbReference type="Rhea" id="RHEA-COMP:11965"/>
        <dbReference type="ChEBI" id="CHEBI:15377"/>
        <dbReference type="ChEBI" id="CHEBI:15378"/>
        <dbReference type="ChEBI" id="CHEBI:15379"/>
        <dbReference type="ChEBI" id="CHEBI:17245"/>
        <dbReference type="ChEBI" id="CHEBI:29033"/>
        <dbReference type="ChEBI" id="CHEBI:57618"/>
        <dbReference type="ChEBI" id="CHEBI:57991"/>
        <dbReference type="ChEBI" id="CHEBI:58210"/>
        <dbReference type="ChEBI" id="CHEBI:60344"/>
        <dbReference type="EC" id="1.14.14.18"/>
    </reaction>
</comment>
<comment type="subunit">
    <text evidence="1">Homodimer.</text>
</comment>
<comment type="subcellular location">
    <subcellularLocation>
        <location evidence="1">Cytoplasm</location>
    </subcellularLocation>
</comment>
<comment type="similarity">
    <text evidence="1">Belongs to the antibiotic biosynthesis monooxygenase family. Heme-degrading monooxygenase IsdG subfamily.</text>
</comment>
<sequence length="107" mass="12004">MIIVTNTAKITKGNGHKLIDRFNKVGQVETMPGFLGLEVLLTQNTVDYDEVTISTRWNAKEDFQGWTKSPAFKAAHSHQGGMPDYILDNKISYYDVKVVRMPMAAAQ</sequence>
<proteinExistence type="inferred from homology"/>
<protein>
    <recommendedName>
        <fullName evidence="1">Heme-degrading monooxygenase</fullName>
        <ecNumber evidence="1">1.14.14.18</ecNumber>
    </recommendedName>
    <alternativeName>
        <fullName evidence="1">Heme oxygenase</fullName>
    </alternativeName>
    <alternativeName>
        <fullName evidence="1">Iron-regulated surface determinant</fullName>
    </alternativeName>
    <alternativeName>
        <fullName evidence="1">Iron-responsive surface determinant</fullName>
    </alternativeName>
</protein>
<accession>C3PAD1</accession>
<gene>
    <name evidence="1" type="primary">isdG</name>
    <name type="ordered locus">BAA_4795</name>
</gene>
<name>HDOX_BACAA</name>